<keyword id="KW-0998">Cell outer membrane</keyword>
<keyword id="KW-0406">Ion transport</keyword>
<keyword id="KW-0472">Membrane</keyword>
<keyword id="KW-0626">Porin</keyword>
<keyword id="KW-0732">Signal</keyword>
<keyword id="KW-0762">Sugar transport</keyword>
<keyword id="KW-0812">Transmembrane</keyword>
<keyword id="KW-1134">Transmembrane beta strand</keyword>
<keyword id="KW-0813">Transport</keyword>
<dbReference type="EMBL" id="CP000243">
    <property type="protein sequence ID" value="ABE10014.1"/>
    <property type="molecule type" value="Genomic_DNA"/>
</dbReference>
<dbReference type="RefSeq" id="WP_000973666.1">
    <property type="nucleotide sequence ID" value="NZ_CP064825.1"/>
</dbReference>
<dbReference type="SMR" id="Q1R3Q0"/>
<dbReference type="KEGG" id="eci:UTI89_C4606"/>
<dbReference type="HOGENOM" id="CLU_032473_4_1_6"/>
<dbReference type="Proteomes" id="UP000001952">
    <property type="component" value="Chromosome"/>
</dbReference>
<dbReference type="GO" id="GO:0009279">
    <property type="term" value="C:cell outer membrane"/>
    <property type="evidence" value="ECO:0007669"/>
    <property type="project" value="UniProtKB-SubCell"/>
</dbReference>
<dbReference type="GO" id="GO:0046930">
    <property type="term" value="C:pore complex"/>
    <property type="evidence" value="ECO:0007669"/>
    <property type="project" value="UniProtKB-KW"/>
</dbReference>
<dbReference type="GO" id="GO:0042958">
    <property type="term" value="F:maltodextrin transmembrane transporter activity"/>
    <property type="evidence" value="ECO:0007669"/>
    <property type="project" value="InterPro"/>
</dbReference>
<dbReference type="GO" id="GO:0015481">
    <property type="term" value="F:maltose transporting porin activity"/>
    <property type="evidence" value="ECO:0007669"/>
    <property type="project" value="InterPro"/>
</dbReference>
<dbReference type="GO" id="GO:0006811">
    <property type="term" value="P:monoatomic ion transport"/>
    <property type="evidence" value="ECO:0007669"/>
    <property type="project" value="UniProtKB-KW"/>
</dbReference>
<dbReference type="CDD" id="cd01346">
    <property type="entry name" value="Maltoporin-like"/>
    <property type="match status" value="1"/>
</dbReference>
<dbReference type="FunFam" id="2.40.170.10:FF:000001">
    <property type="entry name" value="Maltoporin"/>
    <property type="match status" value="1"/>
</dbReference>
<dbReference type="Gene3D" id="2.40.170.10">
    <property type="entry name" value="Porin, LamB type"/>
    <property type="match status" value="1"/>
</dbReference>
<dbReference type="HAMAP" id="MF_01301">
    <property type="entry name" value="LamB"/>
    <property type="match status" value="1"/>
</dbReference>
<dbReference type="InterPro" id="IPR050286">
    <property type="entry name" value="G_neg_Bact_CarbUptk_Porin"/>
</dbReference>
<dbReference type="InterPro" id="IPR023738">
    <property type="entry name" value="Maltoporin"/>
</dbReference>
<dbReference type="InterPro" id="IPR003192">
    <property type="entry name" value="Porin_LamB"/>
</dbReference>
<dbReference type="InterPro" id="IPR036998">
    <property type="entry name" value="Porin_LamB_sf"/>
</dbReference>
<dbReference type="NCBIfam" id="NF006860">
    <property type="entry name" value="PRK09360.1"/>
    <property type="match status" value="1"/>
</dbReference>
<dbReference type="PANTHER" id="PTHR38762">
    <property type="entry name" value="CRYPTIC OUTER MEMBRANE PORIN BGLH-RELATED"/>
    <property type="match status" value="1"/>
</dbReference>
<dbReference type="PANTHER" id="PTHR38762:SF1">
    <property type="entry name" value="CRYPTIC OUTER MEMBRANE PORIN BGLH-RELATED"/>
    <property type="match status" value="1"/>
</dbReference>
<dbReference type="Pfam" id="PF02264">
    <property type="entry name" value="LamB"/>
    <property type="match status" value="1"/>
</dbReference>
<dbReference type="SUPFAM" id="SSF56935">
    <property type="entry name" value="Porins"/>
    <property type="match status" value="1"/>
</dbReference>
<proteinExistence type="inferred from homology"/>
<sequence length="446" mass="49941">MMITLRKLPLAVAVAAGVMSAQAMAVDFHGYARSGIGWTGSGGEQQCFQTTGAQSKYRLGNECETYAELKLGQEVWKEGDKSFYFDTNVAYSVAQQNDWEATDPAFREANVQGKNLIEWLPGSTIWAGKRFYQRHDVHMIDFYYWDISGPGAGLENIDVGFGKLSLAATRSSEAGGSSSFASNNIYDYTNETANDVFDVRLAQMEINPGGTLELGVDYGRANLRDNYRLVDGASKDGWLFTAEHTQSVLKGFNKFVVQYATDSMTSQGKGLSQGSGVAFDNEKFAYNINNNGHMLRILDHGAISMGDNWDMMYVGMYQDINWDNDNGTKWWTVGIRPMYKWTPIMSTVMEIGYDNVESQRTGDKNNQYKITLAQQWQAGDSIWSRPAIRVFATYAKWDEKWGYDYTGSSSTNPYYGKAVSADFNGGSFGRGDSDEWTFGAQMEIWW</sequence>
<accession>Q1R3Q0</accession>
<name>LAMB_ECOUT</name>
<feature type="signal peptide" evidence="1">
    <location>
        <begin position="1"/>
        <end position="25"/>
    </location>
</feature>
<feature type="chain" id="PRO_0000290217" description="Maltoporin">
    <location>
        <begin position="26"/>
        <end position="446"/>
    </location>
</feature>
<feature type="site" description="Greasy slide, important in sugar transport" evidence="1">
    <location>
        <position position="31"/>
    </location>
</feature>
<feature type="site" description="Greasy slide, important in sugar transport" evidence="1">
    <location>
        <position position="66"/>
    </location>
</feature>
<feature type="site" description="Greasy slide, important in sugar transport" evidence="1">
    <location>
        <position position="99"/>
    </location>
</feature>
<feature type="site" description="Important in sugar transport" evidence="1">
    <location>
        <position position="143"/>
    </location>
</feature>
<feature type="site" description="Greasy slide, important in sugar transport" evidence="1">
    <location>
        <position position="252"/>
    </location>
</feature>
<feature type="site" description="Greasy slide, important in sugar transport" evidence="1">
    <location>
        <position position="383"/>
    </location>
</feature>
<feature type="site" description="Greasy slide, important in sugar transport" evidence="1">
    <location>
        <position position="445"/>
    </location>
</feature>
<comment type="function">
    <text evidence="1">Involved in the transport of maltose and maltodextrins.</text>
</comment>
<comment type="catalytic activity">
    <reaction evidence="1">
        <text>beta-maltose(in) = beta-maltose(out)</text>
        <dbReference type="Rhea" id="RHEA:29731"/>
        <dbReference type="ChEBI" id="CHEBI:18147"/>
    </reaction>
</comment>
<comment type="subunit">
    <text evidence="1">Homotrimer formed of three 18-stranded antiparallel beta-barrels, containing three independent channels.</text>
</comment>
<comment type="subcellular location">
    <subcellularLocation>
        <location evidence="1">Cell outer membrane</location>
        <topology evidence="1">Multi-pass membrane protein</topology>
    </subcellularLocation>
</comment>
<comment type="induction">
    <text evidence="1">By maltose.</text>
</comment>
<comment type="similarity">
    <text evidence="1">Belongs to the porin LamB (TC 1.B.3) family.</text>
</comment>
<evidence type="ECO:0000255" key="1">
    <source>
        <dbReference type="HAMAP-Rule" id="MF_01301"/>
    </source>
</evidence>
<reference key="1">
    <citation type="journal article" date="2006" name="Proc. Natl. Acad. Sci. U.S.A.">
        <title>Identification of genes subject to positive selection in uropathogenic strains of Escherichia coli: a comparative genomics approach.</title>
        <authorList>
            <person name="Chen S.L."/>
            <person name="Hung C.-S."/>
            <person name="Xu J."/>
            <person name="Reigstad C.S."/>
            <person name="Magrini V."/>
            <person name="Sabo A."/>
            <person name="Blasiar D."/>
            <person name="Bieri T."/>
            <person name="Meyer R.R."/>
            <person name="Ozersky P."/>
            <person name="Armstrong J.R."/>
            <person name="Fulton R.S."/>
            <person name="Latreille J.P."/>
            <person name="Spieth J."/>
            <person name="Hooton T.M."/>
            <person name="Mardis E.R."/>
            <person name="Hultgren S.J."/>
            <person name="Gordon J.I."/>
        </authorList>
    </citation>
    <scope>NUCLEOTIDE SEQUENCE [LARGE SCALE GENOMIC DNA]</scope>
    <source>
        <strain>UTI89 / UPEC</strain>
    </source>
</reference>
<protein>
    <recommendedName>
        <fullName evidence="1">Maltoporin</fullName>
    </recommendedName>
    <alternativeName>
        <fullName evidence="1">Maltose-inducible porin</fullName>
    </alternativeName>
</protein>
<organism>
    <name type="scientific">Escherichia coli (strain UTI89 / UPEC)</name>
    <dbReference type="NCBI Taxonomy" id="364106"/>
    <lineage>
        <taxon>Bacteria</taxon>
        <taxon>Pseudomonadati</taxon>
        <taxon>Pseudomonadota</taxon>
        <taxon>Gammaproteobacteria</taxon>
        <taxon>Enterobacterales</taxon>
        <taxon>Enterobacteriaceae</taxon>
        <taxon>Escherichia</taxon>
    </lineage>
</organism>
<gene>
    <name evidence="1" type="primary">lamB</name>
    <name type="ordered locus">UTI89_C4606</name>
</gene>